<sequence length="197" mass="21662">MSLQIDAVILAGGMARRMGGDDKGLVELNGKAMIEHTIERIKPQVKEILINANRNQTRYAEFGFTVLSDEHTGFLGPLAGMITAMGHTQADYLLVVPCDCPLLPRDLVARLLAAIKANDAELAVASDGEREQPVVMLLKPSLRESMTAFLEAGERKIDFWYAKHRFAVAAFADQPNAFVNVNTPEQKQRLAAEINQS</sequence>
<proteinExistence type="inferred from homology"/>
<feature type="chain" id="PRO_1000019152" description="Molybdenum cofactor guanylyltransferase">
    <location>
        <begin position="1"/>
        <end position="197"/>
    </location>
</feature>
<feature type="binding site" evidence="1">
    <location>
        <begin position="10"/>
        <end position="12"/>
    </location>
    <ligand>
        <name>GTP</name>
        <dbReference type="ChEBI" id="CHEBI:37565"/>
    </ligand>
</feature>
<feature type="binding site" evidence="1">
    <location>
        <position position="23"/>
    </location>
    <ligand>
        <name>GTP</name>
        <dbReference type="ChEBI" id="CHEBI:37565"/>
    </ligand>
</feature>
<feature type="binding site" evidence="1">
    <location>
        <position position="51"/>
    </location>
    <ligand>
        <name>GTP</name>
        <dbReference type="ChEBI" id="CHEBI:37565"/>
    </ligand>
</feature>
<feature type="binding site" evidence="1">
    <location>
        <position position="69"/>
    </location>
    <ligand>
        <name>GTP</name>
        <dbReference type="ChEBI" id="CHEBI:37565"/>
    </ligand>
</feature>
<feature type="binding site" evidence="1">
    <location>
        <position position="99"/>
    </location>
    <ligand>
        <name>GTP</name>
        <dbReference type="ChEBI" id="CHEBI:37565"/>
    </ligand>
</feature>
<feature type="binding site" evidence="1">
    <location>
        <position position="99"/>
    </location>
    <ligand>
        <name>Mg(2+)</name>
        <dbReference type="ChEBI" id="CHEBI:18420"/>
    </ligand>
</feature>
<evidence type="ECO:0000255" key="1">
    <source>
        <dbReference type="HAMAP-Rule" id="MF_00316"/>
    </source>
</evidence>
<accession>Q0HDC7</accession>
<organism>
    <name type="scientific">Shewanella sp. (strain MR-4)</name>
    <dbReference type="NCBI Taxonomy" id="60480"/>
    <lineage>
        <taxon>Bacteria</taxon>
        <taxon>Pseudomonadati</taxon>
        <taxon>Pseudomonadota</taxon>
        <taxon>Gammaproteobacteria</taxon>
        <taxon>Alteromonadales</taxon>
        <taxon>Shewanellaceae</taxon>
        <taxon>Shewanella</taxon>
    </lineage>
</organism>
<protein>
    <recommendedName>
        <fullName evidence="1">Molybdenum cofactor guanylyltransferase</fullName>
        <shortName evidence="1">MoCo guanylyltransferase</shortName>
        <ecNumber evidence="1">2.7.7.77</ecNumber>
    </recommendedName>
    <alternativeName>
        <fullName evidence="1">GTP:molybdopterin guanylyltransferase</fullName>
    </alternativeName>
    <alternativeName>
        <fullName evidence="1">Mo-MPT guanylyltransferase</fullName>
    </alternativeName>
    <alternativeName>
        <fullName evidence="1">Molybdopterin guanylyltransferase</fullName>
    </alternativeName>
    <alternativeName>
        <fullName evidence="1">Molybdopterin-guanine dinucleotide synthase</fullName>
        <shortName evidence="1">MGD synthase</shortName>
    </alternativeName>
</protein>
<reference key="1">
    <citation type="submission" date="2006-08" db="EMBL/GenBank/DDBJ databases">
        <title>Complete sequence of Shewanella sp. MR-4.</title>
        <authorList>
            <consortium name="US DOE Joint Genome Institute"/>
            <person name="Copeland A."/>
            <person name="Lucas S."/>
            <person name="Lapidus A."/>
            <person name="Barry K."/>
            <person name="Detter J.C."/>
            <person name="Glavina del Rio T."/>
            <person name="Hammon N."/>
            <person name="Israni S."/>
            <person name="Dalin E."/>
            <person name="Tice H."/>
            <person name="Pitluck S."/>
            <person name="Kiss H."/>
            <person name="Brettin T."/>
            <person name="Bruce D."/>
            <person name="Han C."/>
            <person name="Tapia R."/>
            <person name="Gilna P."/>
            <person name="Schmutz J."/>
            <person name="Larimer F."/>
            <person name="Land M."/>
            <person name="Hauser L."/>
            <person name="Kyrpides N."/>
            <person name="Mikhailova N."/>
            <person name="Nealson K."/>
            <person name="Konstantinidis K."/>
            <person name="Klappenbach J."/>
            <person name="Tiedje J."/>
            <person name="Richardson P."/>
        </authorList>
    </citation>
    <scope>NUCLEOTIDE SEQUENCE [LARGE SCALE GENOMIC DNA]</scope>
    <source>
        <strain>MR-4</strain>
    </source>
</reference>
<dbReference type="EC" id="2.7.7.77" evidence="1"/>
<dbReference type="EMBL" id="CP000446">
    <property type="protein sequence ID" value="ABI40940.1"/>
    <property type="molecule type" value="Genomic_DNA"/>
</dbReference>
<dbReference type="RefSeq" id="WP_011624598.1">
    <property type="nucleotide sequence ID" value="NC_008321.1"/>
</dbReference>
<dbReference type="SMR" id="Q0HDC7"/>
<dbReference type="KEGG" id="she:Shewmr4_3877"/>
<dbReference type="HOGENOM" id="CLU_055597_5_1_6"/>
<dbReference type="GO" id="GO:0005737">
    <property type="term" value="C:cytoplasm"/>
    <property type="evidence" value="ECO:0007669"/>
    <property type="project" value="UniProtKB-SubCell"/>
</dbReference>
<dbReference type="GO" id="GO:0005525">
    <property type="term" value="F:GTP binding"/>
    <property type="evidence" value="ECO:0007669"/>
    <property type="project" value="UniProtKB-UniRule"/>
</dbReference>
<dbReference type="GO" id="GO:0046872">
    <property type="term" value="F:metal ion binding"/>
    <property type="evidence" value="ECO:0007669"/>
    <property type="project" value="UniProtKB-KW"/>
</dbReference>
<dbReference type="GO" id="GO:0061603">
    <property type="term" value="F:molybdenum cofactor guanylyltransferase activity"/>
    <property type="evidence" value="ECO:0007669"/>
    <property type="project" value="UniProtKB-EC"/>
</dbReference>
<dbReference type="GO" id="GO:1902758">
    <property type="term" value="P:bis(molybdopterin guanine dinucleotide)molybdenum biosynthetic process"/>
    <property type="evidence" value="ECO:0007669"/>
    <property type="project" value="TreeGrafter"/>
</dbReference>
<dbReference type="CDD" id="cd02503">
    <property type="entry name" value="MobA"/>
    <property type="match status" value="1"/>
</dbReference>
<dbReference type="FunFam" id="3.90.550.10:FF:000338">
    <property type="entry name" value="Molybdenum cofactor guanylyltransferase"/>
    <property type="match status" value="1"/>
</dbReference>
<dbReference type="Gene3D" id="3.90.550.10">
    <property type="entry name" value="Spore Coat Polysaccharide Biosynthesis Protein SpsA, Chain A"/>
    <property type="match status" value="1"/>
</dbReference>
<dbReference type="HAMAP" id="MF_00316">
    <property type="entry name" value="MobA"/>
    <property type="match status" value="1"/>
</dbReference>
<dbReference type="InterPro" id="IPR025877">
    <property type="entry name" value="MobA-like_NTP_Trfase"/>
</dbReference>
<dbReference type="InterPro" id="IPR013482">
    <property type="entry name" value="Molybde_CF_guanTrfase"/>
</dbReference>
<dbReference type="InterPro" id="IPR029044">
    <property type="entry name" value="Nucleotide-diphossugar_trans"/>
</dbReference>
<dbReference type="NCBIfam" id="TIGR02665">
    <property type="entry name" value="molyb_mobA"/>
    <property type="match status" value="1"/>
</dbReference>
<dbReference type="PANTHER" id="PTHR19136">
    <property type="entry name" value="MOLYBDENUM COFACTOR GUANYLYLTRANSFERASE"/>
    <property type="match status" value="1"/>
</dbReference>
<dbReference type="PANTHER" id="PTHR19136:SF81">
    <property type="entry name" value="MOLYBDENUM COFACTOR GUANYLYLTRANSFERASE"/>
    <property type="match status" value="1"/>
</dbReference>
<dbReference type="Pfam" id="PF12804">
    <property type="entry name" value="NTP_transf_3"/>
    <property type="match status" value="1"/>
</dbReference>
<dbReference type="SUPFAM" id="SSF53448">
    <property type="entry name" value="Nucleotide-diphospho-sugar transferases"/>
    <property type="match status" value="1"/>
</dbReference>
<comment type="function">
    <text evidence="1">Transfers a GMP moiety from GTP to Mo-molybdopterin (Mo-MPT) cofactor (Moco or molybdenum cofactor) to form Mo-molybdopterin guanine dinucleotide (Mo-MGD) cofactor.</text>
</comment>
<comment type="catalytic activity">
    <reaction evidence="1">
        <text>Mo-molybdopterin + GTP + H(+) = Mo-molybdopterin guanine dinucleotide + diphosphate</text>
        <dbReference type="Rhea" id="RHEA:34243"/>
        <dbReference type="ChEBI" id="CHEBI:15378"/>
        <dbReference type="ChEBI" id="CHEBI:33019"/>
        <dbReference type="ChEBI" id="CHEBI:37565"/>
        <dbReference type="ChEBI" id="CHEBI:71302"/>
        <dbReference type="ChEBI" id="CHEBI:71310"/>
        <dbReference type="EC" id="2.7.7.77"/>
    </reaction>
</comment>
<comment type="cofactor">
    <cofactor evidence="1">
        <name>Mg(2+)</name>
        <dbReference type="ChEBI" id="CHEBI:18420"/>
    </cofactor>
</comment>
<comment type="subunit">
    <text evidence="1">Monomer.</text>
</comment>
<comment type="subcellular location">
    <subcellularLocation>
        <location evidence="1">Cytoplasm</location>
    </subcellularLocation>
</comment>
<comment type="domain">
    <text evidence="1">The N-terminal domain determines nucleotide recognition and specific binding, while the C-terminal domain determines the specific binding to the target protein.</text>
</comment>
<comment type="similarity">
    <text evidence="1">Belongs to the MobA family.</text>
</comment>
<gene>
    <name evidence="1" type="primary">mobA</name>
    <name type="ordered locus">Shewmr4_3877</name>
</gene>
<keyword id="KW-0963">Cytoplasm</keyword>
<keyword id="KW-0342">GTP-binding</keyword>
<keyword id="KW-0460">Magnesium</keyword>
<keyword id="KW-0479">Metal-binding</keyword>
<keyword id="KW-0501">Molybdenum cofactor biosynthesis</keyword>
<keyword id="KW-0547">Nucleotide-binding</keyword>
<keyword id="KW-0808">Transferase</keyword>
<name>MOBA_SHESM</name>